<feature type="chain" id="PRO_0000213134" description="Protein-cysteine N-palmitoyltransferase HHAT">
    <location>
        <begin position="1"/>
        <end position="493"/>
    </location>
</feature>
<feature type="topological domain" description="Cytoplasmic" evidence="1">
    <location>
        <begin position="1"/>
        <end position="5"/>
    </location>
</feature>
<feature type="transmembrane region" description="Helical" evidence="1">
    <location>
        <begin position="6"/>
        <end position="22"/>
    </location>
</feature>
<feature type="topological domain" description="Lumenal" evidence="1">
    <location>
        <begin position="23"/>
        <end position="67"/>
    </location>
</feature>
<feature type="transmembrane region" description="Helical" evidence="1">
    <location>
        <begin position="68"/>
        <end position="84"/>
    </location>
</feature>
<feature type="topological domain" description="Cytoplasmic" evidence="1">
    <location>
        <begin position="85"/>
        <end position="94"/>
    </location>
</feature>
<feature type="intramembrane region" evidence="1">
    <location>
        <begin position="95"/>
        <end position="119"/>
    </location>
</feature>
<feature type="topological domain" description="Cytoplasmic" evidence="1">
    <location>
        <begin position="120"/>
        <end position="131"/>
    </location>
</feature>
<feature type="transmembrane region" description="Helical" evidence="1">
    <location>
        <begin position="132"/>
        <end position="148"/>
    </location>
</feature>
<feature type="topological domain" description="Lumenal" evidence="1">
    <location>
        <begin position="149"/>
        <end position="162"/>
    </location>
</feature>
<feature type="transmembrane region" description="Helical" evidence="1">
    <location>
        <begin position="163"/>
        <end position="183"/>
    </location>
</feature>
<feature type="topological domain" description="Cytoplasmic" evidence="1">
    <location>
        <begin position="184"/>
        <end position="202"/>
    </location>
</feature>
<feature type="intramembrane region" evidence="1">
    <location>
        <begin position="203"/>
        <end position="217"/>
    </location>
</feature>
<feature type="topological domain" description="Cytoplasmic" evidence="1">
    <location>
        <begin position="218"/>
        <end position="243"/>
    </location>
</feature>
<feature type="transmembrane region" description="Helical" evidence="1">
    <location>
        <begin position="244"/>
        <end position="271"/>
    </location>
</feature>
<feature type="topological domain" description="Lumenal" evidence="1">
    <location>
        <begin position="272"/>
        <end position="281"/>
    </location>
</feature>
<feature type="transmembrane region" description="Helical" evidence="1">
    <location>
        <begin position="282"/>
        <end position="310"/>
    </location>
</feature>
<feature type="topological domain" description="Cytoplasmic" evidence="1">
    <location>
        <begin position="311"/>
        <end position="363"/>
    </location>
</feature>
<feature type="transmembrane region" description="Helical" evidence="1">
    <location>
        <begin position="364"/>
        <end position="380"/>
    </location>
</feature>
<feature type="topological domain" description="Lumenal" evidence="1">
    <location>
        <begin position="381"/>
        <end position="383"/>
    </location>
</feature>
<feature type="transmembrane region" description="Helical" evidence="1">
    <location>
        <begin position="384"/>
        <end position="399"/>
    </location>
</feature>
<feature type="topological domain" description="Cytoplasmic" evidence="1">
    <location>
        <begin position="400"/>
        <end position="427"/>
    </location>
</feature>
<feature type="transmembrane region" description="Helical" evidence="1">
    <location>
        <begin position="428"/>
        <end position="448"/>
    </location>
</feature>
<feature type="topological domain" description="Lumenal" evidence="1">
    <location>
        <begin position="449"/>
        <end position="462"/>
    </location>
</feature>
<feature type="transmembrane region" description="Helical" evidence="1">
    <location>
        <begin position="463"/>
        <end position="481"/>
    </location>
</feature>
<feature type="topological domain" description="Cytoplasmic" evidence="1">
    <location>
        <begin position="482"/>
        <end position="493"/>
    </location>
</feature>
<feature type="region of interest" description="Essential for palmitoylation of SHH" evidence="6">
    <location>
        <begin position="91"/>
        <end position="155"/>
    </location>
</feature>
<feature type="active site" evidence="1">
    <location>
        <position position="379"/>
    </location>
</feature>
<feature type="binding site" evidence="17">
    <location>
        <begin position="448"/>
        <end position="455"/>
    </location>
    <ligand>
        <name>GTP</name>
        <dbReference type="ChEBI" id="CHEBI:37565"/>
    </ligand>
</feature>
<feature type="lipid moiety-binding region" description="S-palmitoyl cysteine" evidence="19">
    <location>
        <position position="188"/>
    </location>
</feature>
<feature type="lipid moiety-binding region" description="S-palmitoyl cysteine" evidence="19">
    <location>
        <position position="242"/>
    </location>
</feature>
<feature type="lipid moiety-binding region" description="S-palmitoyl cysteine" evidence="19">
    <location>
        <position position="324"/>
    </location>
</feature>
<feature type="lipid moiety-binding region" description="S-palmitoyl cysteine" evidence="19">
    <location>
        <position position="410"/>
    </location>
</feature>
<feature type="splice variant" id="VSP_016685" description="In isoform 4." evidence="14">
    <location>
        <begin position="1"/>
        <end position="369"/>
    </location>
</feature>
<feature type="splice variant" id="VSP_044968" description="In isoform 7." evidence="13">
    <original>MLPRWELALYLLASLGFHFYSFYEVYKVSR</original>
    <variation>MSLGLGSAERGVLGTRGARERCRRRRPGQPG</variation>
    <location>
        <begin position="1"/>
        <end position="30"/>
    </location>
</feature>
<feature type="splice variant" id="VSP_016686" description="In isoform 2 and isoform 5." evidence="12 13 15">
    <location>
        <begin position="91"/>
        <end position="155"/>
    </location>
</feature>
<feature type="splice variant" id="VSP_043481" description="In isoform 6." evidence="13">
    <location>
        <begin position="92"/>
        <end position="228"/>
    </location>
</feature>
<feature type="splice variant" id="VSP_016687" description="In isoform 4." evidence="14">
    <original>ARYFSPQARRRFHAALASCSTSMLILSNLVFLGGNE</original>
    <variation>VSRILAPVLGDSGTRQIRFIRDGAIRFPAPTMGPFY</variation>
    <location>
        <begin position="416"/>
        <end position="451"/>
    </location>
</feature>
<feature type="splice variant" id="VSP_016688" description="In isoform 4." evidence="14">
    <location>
        <begin position="452"/>
        <end position="493"/>
    </location>
</feature>
<feature type="splice variant" id="VSP_016689" description="In isoform 2 and isoform 3." evidence="12 15">
    <original>WPWVTLSVLGFLYCYSHVGIAWAQTYATD</original>
    <variation>GLFLFFLLNPCWETAFQGFPVFLHFLQTEVLATFVPNYFSWNICIENTSELSSY</variation>
    <location>
        <begin position="465"/>
        <end position="493"/>
    </location>
</feature>
<feature type="sequence variant" id="VAR_050024" description="In dbSNP:rs2228898.">
    <original>E</original>
    <variation>G</variation>
    <location>
        <position position="165"/>
    </location>
</feature>
<feature type="sequence variant" id="VAR_024743" description="In dbSNP:rs2294851." evidence="5">
    <original>S</original>
    <variation>N</variation>
    <location>
        <position position="182"/>
    </location>
</feature>
<feature type="sequence variant" id="VAR_061336" description="In dbSNP:rs34228541." evidence="4">
    <original>C</original>
    <variation>R</variation>
    <location>
        <position position="188"/>
    </location>
</feature>
<feature type="sequence variant" id="VAR_085239" description="In NNMS; uncertain significance." evidence="10">
    <original>L</original>
    <variation>P</variation>
    <location>
        <position position="257"/>
    </location>
</feature>
<feature type="sequence variant" id="VAR_085240" description="In NNMS; loss of palmitoyltransferase activity; unable to carry out SHH and DHH palmitoylation; does not affect HHAT protein levels." evidence="7">
    <original>G</original>
    <variation>V</variation>
    <location>
        <position position="287"/>
    </location>
</feature>
<feature type="sequence variant" id="VAR_024744" description="In a melanoma cell line; abolishes GTP-binding; dbSNP:rs757163023." evidence="2">
    <original>G</original>
    <variation>E</variation>
    <location>
        <position position="448"/>
    </location>
</feature>
<feature type="sequence variant" id="VAR_024745" description="In a lung cancer cell line; dbSNP:rs147954610." evidence="2">
    <original>N</original>
    <variation>S</variation>
    <location>
        <position position="450"/>
    </location>
</feature>
<feature type="mutagenesis site" description="No significant effect on catalytic activity. Defective HHAT-mediated palmitoyl-CoA uptake into microsomal membranes." evidence="11">
    <original>Y</original>
    <variation>A</variation>
    <location>
        <position position="351"/>
    </location>
</feature>
<feature type="mutagenesis site" description="Reduced catalytic activity. Defective HHAT-mediated palmitoyl-CoA uptake into microsomal membranes." evidence="6 11">
    <original>H</original>
    <variation>A</variation>
    <location>
        <position position="379"/>
    </location>
</feature>
<feature type="sequence conflict" description="In Ref. 2; BAA91772." evidence="16" ref="2">
    <original>L</original>
    <variation>P</variation>
    <location>
        <position position="2"/>
    </location>
</feature>
<feature type="sequence conflict" description="In Ref. 2; BAH14561." evidence="16" ref="2">
    <original>M</original>
    <variation>V</variation>
    <location>
        <position position="204"/>
    </location>
</feature>
<feature type="sequence conflict" description="In Ref. 2; BAA91772." evidence="16" ref="2">
    <original>N</original>
    <variation>D</variation>
    <location>
        <position position="450"/>
    </location>
</feature>
<feature type="helix" evidence="20">
    <location>
        <begin position="4"/>
        <end position="27"/>
    </location>
</feature>
<feature type="helix" evidence="20">
    <location>
        <begin position="33"/>
        <end position="37"/>
    </location>
</feature>
<feature type="strand" evidence="20">
    <location>
        <begin position="42"/>
        <end position="44"/>
    </location>
</feature>
<feature type="turn" evidence="21">
    <location>
        <begin position="47"/>
        <end position="50"/>
    </location>
</feature>
<feature type="strand" evidence="20">
    <location>
        <begin position="52"/>
        <end position="54"/>
    </location>
</feature>
<feature type="helix" evidence="20">
    <location>
        <begin position="59"/>
        <end position="69"/>
    </location>
</feature>
<feature type="helix" evidence="20">
    <location>
        <begin position="71"/>
        <end position="88"/>
    </location>
</feature>
<feature type="helix" evidence="20">
    <location>
        <begin position="93"/>
        <end position="128"/>
    </location>
</feature>
<feature type="helix" evidence="20">
    <location>
        <begin position="133"/>
        <end position="147"/>
    </location>
</feature>
<feature type="helix" evidence="20">
    <location>
        <begin position="150"/>
        <end position="157"/>
    </location>
</feature>
<feature type="strand" evidence="20">
    <location>
        <begin position="161"/>
        <end position="163"/>
    </location>
</feature>
<feature type="helix" evidence="20">
    <location>
        <begin position="164"/>
        <end position="189"/>
    </location>
</feature>
<feature type="helix" evidence="22">
    <location>
        <begin position="193"/>
        <end position="195"/>
    </location>
</feature>
<feature type="helix" evidence="20">
    <location>
        <begin position="196"/>
        <end position="198"/>
    </location>
</feature>
<feature type="helix" evidence="20">
    <location>
        <begin position="201"/>
        <end position="208"/>
    </location>
</feature>
<feature type="helix" evidence="20">
    <location>
        <begin position="211"/>
        <end position="213"/>
    </location>
</feature>
<feature type="strand" evidence="20">
    <location>
        <begin position="214"/>
        <end position="216"/>
    </location>
</feature>
<feature type="helix" evidence="20">
    <location>
        <begin position="222"/>
        <end position="229"/>
    </location>
</feature>
<feature type="helix" evidence="20">
    <location>
        <begin position="237"/>
        <end position="264"/>
    </location>
</feature>
<feature type="helix" evidence="20">
    <location>
        <begin position="267"/>
        <end position="271"/>
    </location>
</feature>
<feature type="helix" evidence="20">
    <location>
        <begin position="274"/>
        <end position="277"/>
    </location>
</feature>
<feature type="helix" evidence="20">
    <location>
        <begin position="282"/>
        <end position="314"/>
    </location>
</feature>
<feature type="helix" evidence="20">
    <location>
        <begin position="325"/>
        <end position="327"/>
    </location>
</feature>
<feature type="helix" evidence="20">
    <location>
        <begin position="331"/>
        <end position="337"/>
    </location>
</feature>
<feature type="helix" evidence="20">
    <location>
        <begin position="340"/>
        <end position="349"/>
    </location>
</feature>
<feature type="helix" evidence="20">
    <location>
        <begin position="351"/>
        <end position="354"/>
    </location>
</feature>
<feature type="turn" evidence="20">
    <location>
        <begin position="355"/>
        <end position="358"/>
    </location>
</feature>
<feature type="helix" evidence="20">
    <location>
        <begin position="361"/>
        <end position="378"/>
    </location>
</feature>
<feature type="helix" evidence="20">
    <location>
        <begin position="383"/>
        <end position="406"/>
    </location>
</feature>
<feature type="helix" evidence="20">
    <location>
        <begin position="409"/>
        <end position="418"/>
    </location>
</feature>
<feature type="helix" evidence="20">
    <location>
        <begin position="421"/>
        <end position="448"/>
    </location>
</feature>
<feature type="helix" evidence="20">
    <location>
        <begin position="450"/>
        <end position="460"/>
    </location>
</feature>
<feature type="turn" evidence="22">
    <location>
        <begin position="462"/>
        <end position="464"/>
    </location>
</feature>
<feature type="turn" evidence="20">
    <location>
        <begin position="465"/>
        <end position="467"/>
    </location>
</feature>
<feature type="helix" evidence="20">
    <location>
        <begin position="468"/>
        <end position="487"/>
    </location>
</feature>
<feature type="turn" evidence="20">
    <location>
        <begin position="488"/>
        <end position="490"/>
    </location>
</feature>
<name>HHAT_HUMAN</name>
<dbReference type="EC" id="2.3.1.-"/>
<dbReference type="EMBL" id="AK001586">
    <property type="protein sequence ID" value="BAA91772.1"/>
    <property type="molecule type" value="mRNA"/>
</dbReference>
<dbReference type="EMBL" id="AK297193">
    <property type="protein sequence ID" value="BAH12521.1"/>
    <property type="molecule type" value="mRNA"/>
</dbReference>
<dbReference type="EMBL" id="AK298991">
    <property type="protein sequence ID" value="BAH12917.1"/>
    <property type="molecule type" value="mRNA"/>
</dbReference>
<dbReference type="EMBL" id="AK302955">
    <property type="protein sequence ID" value="BAH13854.1"/>
    <property type="molecule type" value="mRNA"/>
</dbReference>
<dbReference type="EMBL" id="AK316190">
    <property type="protein sequence ID" value="BAH14561.1"/>
    <property type="molecule type" value="mRNA"/>
</dbReference>
<dbReference type="EMBL" id="AK316524">
    <property type="protein sequence ID" value="BAH14895.1"/>
    <property type="molecule type" value="mRNA"/>
</dbReference>
<dbReference type="EMBL" id="CR936628">
    <property type="protein sequence ID" value="CAI56771.1"/>
    <property type="molecule type" value="mRNA"/>
</dbReference>
<dbReference type="EMBL" id="AC096636">
    <property type="status" value="NOT_ANNOTATED_CDS"/>
    <property type="molecule type" value="Genomic_DNA"/>
</dbReference>
<dbReference type="EMBL" id="AL034351">
    <property type="status" value="NOT_ANNOTATED_CDS"/>
    <property type="molecule type" value="Genomic_DNA"/>
</dbReference>
<dbReference type="EMBL" id="AL035414">
    <property type="status" value="NOT_ANNOTATED_CDS"/>
    <property type="molecule type" value="Genomic_DNA"/>
</dbReference>
<dbReference type="EMBL" id="AL590653">
    <property type="status" value="NOT_ANNOTATED_CDS"/>
    <property type="molecule type" value="Genomic_DNA"/>
</dbReference>
<dbReference type="EMBL" id="AL691441">
    <property type="status" value="NOT_ANNOTATED_CDS"/>
    <property type="molecule type" value="Genomic_DNA"/>
</dbReference>
<dbReference type="EMBL" id="BX255872">
    <property type="status" value="NOT_ANNOTATED_CDS"/>
    <property type="molecule type" value="Genomic_DNA"/>
</dbReference>
<dbReference type="EMBL" id="CH471100">
    <property type="protein sequence ID" value="EAW93427.1"/>
    <property type="molecule type" value="Genomic_DNA"/>
</dbReference>
<dbReference type="EMBL" id="CH471100">
    <property type="protein sequence ID" value="EAW93428.1"/>
    <property type="molecule type" value="Genomic_DNA"/>
</dbReference>
<dbReference type="EMBL" id="CH471100">
    <property type="protein sequence ID" value="EAW93430.1"/>
    <property type="molecule type" value="Genomic_DNA"/>
</dbReference>
<dbReference type="EMBL" id="BC117130">
    <property type="protein sequence ID" value="AAI17131.1"/>
    <property type="molecule type" value="mRNA"/>
</dbReference>
<dbReference type="EMBL" id="AL049848">
    <property type="protein sequence ID" value="CAB42852.1"/>
    <property type="molecule type" value="mRNA"/>
</dbReference>
<dbReference type="CCDS" id="CCDS1495.1">
    <molecule id="Q5VTY9-1"/>
</dbReference>
<dbReference type="CCDS" id="CCDS53471.1">
    <molecule id="Q5VTY9-7"/>
</dbReference>
<dbReference type="CCDS" id="CCDS53472.1">
    <molecule id="Q5VTY9-5"/>
</dbReference>
<dbReference type="CCDS" id="CCDS53473.1">
    <molecule id="Q5VTY9-6"/>
</dbReference>
<dbReference type="RefSeq" id="NP_001116306.1">
    <molecule id="Q5VTY9-1"/>
    <property type="nucleotide sequence ID" value="NM_001122834.4"/>
</dbReference>
<dbReference type="RefSeq" id="NP_001164035.1">
    <molecule id="Q5VTY9-6"/>
    <property type="nucleotide sequence ID" value="NM_001170564.3"/>
</dbReference>
<dbReference type="RefSeq" id="NP_001164051.1">
    <molecule id="Q5VTY9-1"/>
    <property type="nucleotide sequence ID" value="NM_001170580.3"/>
</dbReference>
<dbReference type="RefSeq" id="NP_001164058.1">
    <molecule id="Q5VTY9-7"/>
    <property type="nucleotide sequence ID" value="NM_001170587.3"/>
</dbReference>
<dbReference type="RefSeq" id="NP_001164059.1">
    <molecule id="Q5VTY9-5"/>
    <property type="nucleotide sequence ID" value="NM_001170588.3"/>
</dbReference>
<dbReference type="RefSeq" id="NP_060664.2">
    <molecule id="Q5VTY9-1"/>
    <property type="nucleotide sequence ID" value="NM_018194.6"/>
</dbReference>
<dbReference type="RefSeq" id="XP_011508041.1">
    <property type="nucleotide sequence ID" value="XM_011509739.2"/>
</dbReference>
<dbReference type="RefSeq" id="XP_011508042.1">
    <property type="nucleotide sequence ID" value="XM_011509740.2"/>
</dbReference>
<dbReference type="RefSeq" id="XP_011508043.1">
    <property type="nucleotide sequence ID" value="XM_011509741.2"/>
</dbReference>
<dbReference type="RefSeq" id="XP_011508048.1">
    <property type="nucleotide sequence ID" value="XM_011509746.2"/>
</dbReference>
<dbReference type="RefSeq" id="XP_016857218.1">
    <property type="nucleotide sequence ID" value="XM_017001729.1"/>
</dbReference>
<dbReference type="RefSeq" id="XP_016857221.1">
    <property type="nucleotide sequence ID" value="XM_017001732.1"/>
</dbReference>
<dbReference type="RefSeq" id="XP_016857224.1">
    <property type="nucleotide sequence ID" value="XM_017001735.1"/>
</dbReference>
<dbReference type="RefSeq" id="XP_016857226.1">
    <property type="nucleotide sequence ID" value="XM_017001737.1"/>
</dbReference>
<dbReference type="RefSeq" id="XP_047280760.1">
    <molecule id="Q5VTY9-1"/>
    <property type="nucleotide sequence ID" value="XM_047424804.1"/>
</dbReference>
<dbReference type="RefSeq" id="XP_054187628.1">
    <molecule id="Q5VTY9-1"/>
    <property type="nucleotide sequence ID" value="XM_054331653.1"/>
</dbReference>
<dbReference type="RefSeq" id="XP_054187629.1">
    <molecule id="Q5VTY9-5"/>
    <property type="nucleotide sequence ID" value="XM_054331654.1"/>
</dbReference>
<dbReference type="RefSeq" id="XP_054187633.1">
    <molecule id="Q5VTY9-6"/>
    <property type="nucleotide sequence ID" value="XM_054331658.1"/>
</dbReference>
<dbReference type="RefSeq" id="XP_054193553.1">
    <molecule id="Q5VTY9-1"/>
    <property type="nucleotide sequence ID" value="XM_054337578.1"/>
</dbReference>
<dbReference type="RefSeq" id="XP_054193554.1">
    <molecule id="Q5VTY9-5"/>
    <property type="nucleotide sequence ID" value="XM_054337579.1"/>
</dbReference>
<dbReference type="RefSeq" id="XP_054193558.1">
    <molecule id="Q5VTY9-6"/>
    <property type="nucleotide sequence ID" value="XM_054337583.1"/>
</dbReference>
<dbReference type="PDB" id="6P64">
    <property type="method" value="X-ray"/>
    <property type="resolution" value="3.05 A"/>
    <property type="chains" value="C/H=68-76"/>
</dbReference>
<dbReference type="PDB" id="6UJO">
    <property type="method" value="X-ray"/>
    <property type="resolution" value="2.25 A"/>
    <property type="chains" value="C=68-76"/>
</dbReference>
<dbReference type="PDB" id="6UJQ">
    <property type="method" value="X-ray"/>
    <property type="resolution" value="2.55 A"/>
    <property type="chains" value="C=68-76"/>
</dbReference>
<dbReference type="PDB" id="6UK2">
    <property type="method" value="X-ray"/>
    <property type="resolution" value="3.14 A"/>
    <property type="chains" value="C=68-76"/>
</dbReference>
<dbReference type="PDB" id="6UK4">
    <property type="method" value="X-ray"/>
    <property type="resolution" value="2.70 A"/>
    <property type="chains" value="C=68-76"/>
</dbReference>
<dbReference type="PDB" id="7MHY">
    <property type="method" value="EM"/>
    <property type="resolution" value="2.70 A"/>
    <property type="chains" value="A=1-493"/>
</dbReference>
<dbReference type="PDB" id="7MHZ">
    <property type="method" value="EM"/>
    <property type="resolution" value="3.20 A"/>
    <property type="chains" value="A=1-493"/>
</dbReference>
<dbReference type="PDB" id="7Q1U">
    <property type="method" value="EM"/>
    <property type="resolution" value="2.70 A"/>
    <property type="chains" value="A=1-493"/>
</dbReference>
<dbReference type="PDB" id="7Q6Z">
    <property type="method" value="EM"/>
    <property type="resolution" value="3.59 A"/>
    <property type="chains" value="A=1-493"/>
</dbReference>
<dbReference type="PDB" id="7URF">
    <property type="method" value="EM"/>
    <property type="resolution" value="2.80 A"/>
    <property type="chains" value="A=1-493"/>
</dbReference>
<dbReference type="PDBsum" id="6P64"/>
<dbReference type="PDBsum" id="6UJO"/>
<dbReference type="PDBsum" id="6UJQ"/>
<dbReference type="PDBsum" id="6UK2"/>
<dbReference type="PDBsum" id="6UK4"/>
<dbReference type="PDBsum" id="7MHY"/>
<dbReference type="PDBsum" id="7MHZ"/>
<dbReference type="PDBsum" id="7Q1U"/>
<dbReference type="PDBsum" id="7Q6Z"/>
<dbReference type="PDBsum" id="7URF"/>
<dbReference type="EMDB" id="EMD-13764"/>
<dbReference type="EMDB" id="EMD-13860"/>
<dbReference type="EMDB" id="EMD-23836"/>
<dbReference type="EMDB" id="EMD-23837"/>
<dbReference type="EMDB" id="EMD-26711"/>
<dbReference type="SMR" id="Q5VTY9"/>
<dbReference type="BioGRID" id="120852">
    <property type="interactions" value="2"/>
</dbReference>
<dbReference type="FunCoup" id="Q5VTY9">
    <property type="interactions" value="961"/>
</dbReference>
<dbReference type="IntAct" id="Q5VTY9">
    <property type="interactions" value="1"/>
</dbReference>
<dbReference type="STRING" id="9606.ENSP00000438468"/>
<dbReference type="BindingDB" id="Q5VTY9"/>
<dbReference type="ChEMBL" id="CHEMBL4296243"/>
<dbReference type="SwissLipids" id="SLP:000001949"/>
<dbReference type="TCDB" id="2.A.50.1.4">
    <property type="family name" value="the glycerol uptake (gup) or membrane-bound acyl transferase (mboat) family"/>
</dbReference>
<dbReference type="iPTMnet" id="Q5VTY9"/>
<dbReference type="PhosphoSitePlus" id="Q5VTY9"/>
<dbReference type="SwissPalm" id="Q5VTY9"/>
<dbReference type="BioMuta" id="HHAT"/>
<dbReference type="DMDM" id="74747010"/>
<dbReference type="MassIVE" id="Q5VTY9"/>
<dbReference type="PaxDb" id="9606-ENSP00000438468"/>
<dbReference type="PeptideAtlas" id="Q5VTY9"/>
<dbReference type="ProteomicsDB" id="26462"/>
<dbReference type="ProteomicsDB" id="65361">
    <molecule id="Q5VTY9-1"/>
</dbReference>
<dbReference type="ProteomicsDB" id="65362">
    <molecule id="Q5VTY9-2"/>
</dbReference>
<dbReference type="ProteomicsDB" id="65363">
    <molecule id="Q5VTY9-3"/>
</dbReference>
<dbReference type="ProteomicsDB" id="65365">
    <molecule id="Q5VTY9-5"/>
</dbReference>
<dbReference type="ProteomicsDB" id="65366">
    <molecule id="Q5VTY9-6"/>
</dbReference>
<dbReference type="Antibodypedia" id="47111">
    <property type="antibodies" value="113 antibodies from 23 providers"/>
</dbReference>
<dbReference type="DNASU" id="55733"/>
<dbReference type="Ensembl" id="ENST00000261458.8">
    <molecule id="Q5VTY9-1"/>
    <property type="protein sequence ID" value="ENSP00000261458.3"/>
    <property type="gene ID" value="ENSG00000054392.13"/>
</dbReference>
<dbReference type="Ensembl" id="ENST00000367010.5">
    <molecule id="Q5VTY9-1"/>
    <property type="protein sequence ID" value="ENSP00000355977.1"/>
    <property type="gene ID" value="ENSG00000054392.13"/>
</dbReference>
<dbReference type="Ensembl" id="ENST00000413764.6">
    <molecule id="Q5VTY9-1"/>
    <property type="protein sequence ID" value="ENSP00000416845.2"/>
    <property type="gene ID" value="ENSG00000054392.13"/>
</dbReference>
<dbReference type="Ensembl" id="ENST00000537898.5">
    <molecule id="Q5VTY9-5"/>
    <property type="protein sequence ID" value="ENSP00000442625.1"/>
    <property type="gene ID" value="ENSG00000054392.13"/>
</dbReference>
<dbReference type="Ensembl" id="ENST00000541565.5">
    <molecule id="Q5VTY9-6"/>
    <property type="protein sequence ID" value="ENSP00000444995.1"/>
    <property type="gene ID" value="ENSG00000054392.13"/>
</dbReference>
<dbReference type="Ensembl" id="ENST00000545154.5">
    <molecule id="Q5VTY9-7"/>
    <property type="protein sequence ID" value="ENSP00000438468.1"/>
    <property type="gene ID" value="ENSG00000054392.13"/>
</dbReference>
<dbReference type="Ensembl" id="ENST00000625523.2">
    <molecule id="Q5VTY9-6"/>
    <property type="protein sequence ID" value="ENSP00000486634.1"/>
    <property type="gene ID" value="ENSG00000280680.3"/>
</dbReference>
<dbReference type="Ensembl" id="ENST00000625820.2">
    <molecule id="Q5VTY9-1"/>
    <property type="protein sequence ID" value="ENSP00000486054.1"/>
    <property type="gene ID" value="ENSG00000280680.3"/>
</dbReference>
<dbReference type="Ensembl" id="ENST00000626327.2">
    <molecule id="Q5VTY9-5"/>
    <property type="protein sequence ID" value="ENSP00000487414.1"/>
    <property type="gene ID" value="ENSG00000280680.3"/>
</dbReference>
<dbReference type="Ensembl" id="ENST00000627903.2">
    <molecule id="Q5VTY9-1"/>
    <property type="protein sequence ID" value="ENSP00000487400.1"/>
    <property type="gene ID" value="ENSG00000280680.3"/>
</dbReference>
<dbReference type="Ensembl" id="ENST00000628693.2">
    <molecule id="Q5VTY9-7"/>
    <property type="protein sequence ID" value="ENSP00000486611.1"/>
    <property type="gene ID" value="ENSG00000280680.3"/>
</dbReference>
<dbReference type="Ensembl" id="ENST00000629360.3">
    <molecule id="Q5VTY9-1"/>
    <property type="protein sequence ID" value="ENSP00000486128.1"/>
    <property type="gene ID" value="ENSG00000280680.3"/>
</dbReference>
<dbReference type="GeneID" id="55733"/>
<dbReference type="KEGG" id="hsa:55733"/>
<dbReference type="MANE-Select" id="ENST00000261458.8">
    <property type="protein sequence ID" value="ENSP00000261458.3"/>
    <property type="RefSeq nucleotide sequence ID" value="NM_018194.6"/>
    <property type="RefSeq protein sequence ID" value="NP_060664.2"/>
</dbReference>
<dbReference type="UCSC" id="uc001hhz.5">
    <molecule id="Q5VTY9-1"/>
    <property type="organism name" value="human"/>
</dbReference>
<dbReference type="AGR" id="HGNC:18270"/>
<dbReference type="CTD" id="55733"/>
<dbReference type="DisGeNET" id="55733"/>
<dbReference type="GeneCards" id="HHAT"/>
<dbReference type="HGNC" id="HGNC:18270">
    <property type="gene designation" value="HHAT"/>
</dbReference>
<dbReference type="HPA" id="ENSG00000054392">
    <property type="expression patterns" value="Low tissue specificity"/>
</dbReference>
<dbReference type="MalaCards" id="HHAT"/>
<dbReference type="MIM" id="600092">
    <property type="type" value="phenotype"/>
</dbReference>
<dbReference type="MIM" id="605743">
    <property type="type" value="gene"/>
</dbReference>
<dbReference type="neXtProt" id="NX_Q5VTY9"/>
<dbReference type="OpenTargets" id="ENSG00000054392"/>
<dbReference type="Orphanet" id="1422">
    <property type="disease" value="Chondrodysplasia-difference of sex development syndrome"/>
</dbReference>
<dbReference type="PharmGKB" id="PA134926499"/>
<dbReference type="VEuPathDB" id="HostDB:ENSG00000054392"/>
<dbReference type="eggNOG" id="KOG3860">
    <property type="taxonomic scope" value="Eukaryota"/>
</dbReference>
<dbReference type="GeneTree" id="ENSGT00530000063629"/>
<dbReference type="HOGENOM" id="CLU_027533_3_1_1"/>
<dbReference type="InParanoid" id="Q5VTY9"/>
<dbReference type="OMA" id="AWAQTYT"/>
<dbReference type="OrthoDB" id="420606at2759"/>
<dbReference type="PAN-GO" id="Q5VTY9">
    <property type="GO annotations" value="3 GO annotations based on evolutionary models"/>
</dbReference>
<dbReference type="PhylomeDB" id="Q5VTY9"/>
<dbReference type="TreeFam" id="TF315826"/>
<dbReference type="PathwayCommons" id="Q5VTY9"/>
<dbReference type="Reactome" id="R-HSA-5358346">
    <property type="pathway name" value="Hedgehog ligand biogenesis"/>
</dbReference>
<dbReference type="Reactome" id="R-HSA-5658034">
    <property type="pathway name" value="HHAT G278V doesn't palmitoylate Hh-Np"/>
</dbReference>
<dbReference type="SignaLink" id="Q5VTY9"/>
<dbReference type="SIGNOR" id="Q5VTY9"/>
<dbReference type="BioGRID-ORCS" id="55733">
    <property type="hits" value="10 hits in 1143 CRISPR screens"/>
</dbReference>
<dbReference type="ChiTaRS" id="HHAT">
    <property type="organism name" value="human"/>
</dbReference>
<dbReference type="GenomeRNAi" id="55733"/>
<dbReference type="Pharos" id="Q5VTY9">
    <property type="development level" value="Tchem"/>
</dbReference>
<dbReference type="PRO" id="PR:Q5VTY9"/>
<dbReference type="Proteomes" id="UP000005640">
    <property type="component" value="Chromosome 1"/>
</dbReference>
<dbReference type="RNAct" id="Q5VTY9">
    <property type="molecule type" value="protein"/>
</dbReference>
<dbReference type="Bgee" id="ENSG00000054392">
    <property type="expression patterns" value="Expressed in male germ line stem cell (sensu Vertebrata) in testis and 104 other cell types or tissues"/>
</dbReference>
<dbReference type="ExpressionAtlas" id="Q5VTY9">
    <property type="expression patterns" value="baseline and differential"/>
</dbReference>
<dbReference type="GO" id="GO:0005783">
    <property type="term" value="C:endoplasmic reticulum"/>
    <property type="evidence" value="ECO:0000314"/>
    <property type="project" value="UniProtKB"/>
</dbReference>
<dbReference type="GO" id="GO:0005789">
    <property type="term" value="C:endoplasmic reticulum membrane"/>
    <property type="evidence" value="ECO:0000304"/>
    <property type="project" value="Reactome"/>
</dbReference>
<dbReference type="GO" id="GO:0005794">
    <property type="term" value="C:Golgi apparatus"/>
    <property type="evidence" value="ECO:0000314"/>
    <property type="project" value="UniProtKB"/>
</dbReference>
<dbReference type="GO" id="GO:0000139">
    <property type="term" value="C:Golgi membrane"/>
    <property type="evidence" value="ECO:0007669"/>
    <property type="project" value="UniProtKB-SubCell"/>
</dbReference>
<dbReference type="GO" id="GO:0005525">
    <property type="term" value="F:GTP binding"/>
    <property type="evidence" value="ECO:0007669"/>
    <property type="project" value="UniProtKB-KW"/>
</dbReference>
<dbReference type="GO" id="GO:0008374">
    <property type="term" value="F:O-acyltransferase activity"/>
    <property type="evidence" value="ECO:0000304"/>
    <property type="project" value="Reactome"/>
</dbReference>
<dbReference type="GO" id="GO:0016409">
    <property type="term" value="F:palmitoyltransferase activity"/>
    <property type="evidence" value="ECO:0000318"/>
    <property type="project" value="GO_Central"/>
</dbReference>
<dbReference type="GO" id="GO:0018009">
    <property type="term" value="P:N-terminal peptidyl-L-cysteine N-palmitoylation"/>
    <property type="evidence" value="ECO:0000315"/>
    <property type="project" value="UniProtKB"/>
</dbReference>
<dbReference type="GO" id="GO:0007224">
    <property type="term" value="P:smoothened signaling pathway"/>
    <property type="evidence" value="ECO:0007669"/>
    <property type="project" value="Ensembl"/>
</dbReference>
<dbReference type="InterPro" id="IPR051085">
    <property type="entry name" value="MB_O-acyltransferase"/>
</dbReference>
<dbReference type="InterPro" id="IPR004299">
    <property type="entry name" value="MBOAT_fam"/>
</dbReference>
<dbReference type="PANTHER" id="PTHR13285">
    <property type="entry name" value="ACYLTRANSFERASE"/>
    <property type="match status" value="1"/>
</dbReference>
<dbReference type="PANTHER" id="PTHR13285:SF20">
    <property type="entry name" value="PROTEIN-CYSTEINE N-PALMITOYLTRANSFERASE HHAT"/>
    <property type="match status" value="1"/>
</dbReference>
<dbReference type="Pfam" id="PF03062">
    <property type="entry name" value="MBOAT"/>
    <property type="match status" value="1"/>
</dbReference>
<evidence type="ECO:0000255" key="1"/>
<evidence type="ECO:0000269" key="2">
    <source>
    </source>
</evidence>
<evidence type="ECO:0000269" key="3">
    <source>
    </source>
</evidence>
<evidence type="ECO:0000269" key="4">
    <source>
    </source>
</evidence>
<evidence type="ECO:0000269" key="5">
    <source>
    </source>
</evidence>
<evidence type="ECO:0000269" key="6">
    <source>
    </source>
</evidence>
<evidence type="ECO:0000269" key="7">
    <source>
    </source>
</evidence>
<evidence type="ECO:0000269" key="8">
    <source>
    </source>
</evidence>
<evidence type="ECO:0000269" key="9">
    <source>
    </source>
</evidence>
<evidence type="ECO:0000269" key="10">
    <source>
    </source>
</evidence>
<evidence type="ECO:0000269" key="11">
    <source>
    </source>
</evidence>
<evidence type="ECO:0000303" key="12">
    <source>
    </source>
</evidence>
<evidence type="ECO:0000303" key="13">
    <source>
    </source>
</evidence>
<evidence type="ECO:0000303" key="14">
    <source>
    </source>
</evidence>
<evidence type="ECO:0000303" key="15">
    <source ref="7"/>
</evidence>
<evidence type="ECO:0000305" key="16"/>
<evidence type="ECO:0000305" key="17">
    <source>
    </source>
</evidence>
<evidence type="ECO:0000305" key="18">
    <source>
    </source>
</evidence>
<evidence type="ECO:0000305" key="19">
    <source>
    </source>
</evidence>
<evidence type="ECO:0007829" key="20">
    <source>
        <dbReference type="PDB" id="7MHY"/>
    </source>
</evidence>
<evidence type="ECO:0007829" key="21">
    <source>
        <dbReference type="PDB" id="7Q1U"/>
    </source>
</evidence>
<evidence type="ECO:0007829" key="22">
    <source>
        <dbReference type="PDB" id="7URF"/>
    </source>
</evidence>
<accession>Q5VTY9</accession>
<accession>B7Z4D5</accession>
<accession>B7Z5I1</accession>
<accession>B7Z868</accession>
<accession>B7ZA75</accession>
<accession>D3DT91</accession>
<accession>F5H444</accession>
<accession>Q17RZ7</accession>
<accession>Q4G0K3</accession>
<accession>Q5CZ95</accession>
<accession>Q5TGI2</accession>
<accession>Q9NVH9</accession>
<accession>Q9Y3N8</accession>
<proteinExistence type="evidence at protein level"/>
<sequence>MLPRWELALYLLASLGFHFYSFYEVYKVSREHEEELDQEFELETDTLFGGLKKDATDFEWSFWMEWGKQWLVWLLLGHMVVSQMATLLARKHRPWILMLYGMWACWCVLGTPGVAMVLLHTTISFCVAQFRSQLLTWLCSLLLLSTLRLQGVEEVKRRWYKTENEYYLLQFTLTVRCLYYTSFSLELCWQQLPAASTSYSFPWMLAYVFYYPVLHNGPILSFSEFIKQMQQQEHDSLKASLCVLALGLGRLLCWWWLAELMAHLMYMHAIYSSIPLLETVSCWTLGGLALAQVLFFYVKYLVLFGVPALLMRLDGLTPPALPRCVSTMFSFTGMWRYFDVGLHNFLIRYVYIPVGGSQHGLLGTLFSTAMTFAFVSYWHGGYDYLWCWAALNWLGVTVENGVRRLVETPCIQDSLARYFSPQARRRFHAALASCSTSMLILSNLVFLGGNEVGKTYWNRIFIQGWPWVTLSVLGFLYCYSHVGIAWAQTYATD</sequence>
<protein>
    <recommendedName>
        <fullName>Protein-cysteine N-palmitoyltransferase HHAT</fullName>
        <ecNumber>2.3.1.-</ecNumber>
    </recommendedName>
    <alternativeName>
        <fullName>Hedgehog acyltransferase</fullName>
    </alternativeName>
    <alternativeName>
        <fullName>Melanoma antigen recognized by T-cells 2</fullName>
        <shortName>MART-2</shortName>
    </alternativeName>
    <alternativeName>
        <fullName>Skinny hedgehog protein 1</fullName>
    </alternativeName>
</protein>
<keyword id="KW-0002">3D-structure</keyword>
<keyword id="KW-0012">Acyltransferase</keyword>
<keyword id="KW-0025">Alternative splicing</keyword>
<keyword id="KW-0217">Developmental protein</keyword>
<keyword id="KW-0225">Disease variant</keyword>
<keyword id="KW-0242">Dwarfism</keyword>
<keyword id="KW-0256">Endoplasmic reticulum</keyword>
<keyword id="KW-0333">Golgi apparatus</keyword>
<keyword id="KW-0342">GTP-binding</keyword>
<keyword id="KW-0449">Lipoprotein</keyword>
<keyword id="KW-0472">Membrane</keyword>
<keyword id="KW-0547">Nucleotide-binding</keyword>
<keyword id="KW-0564">Palmitate</keyword>
<keyword id="KW-1267">Proteomics identification</keyword>
<keyword id="KW-1185">Reference proteome</keyword>
<keyword id="KW-0808">Transferase</keyword>
<keyword id="KW-0812">Transmembrane</keyword>
<keyword id="KW-1133">Transmembrane helix</keyword>
<organism>
    <name type="scientific">Homo sapiens</name>
    <name type="common">Human</name>
    <dbReference type="NCBI Taxonomy" id="9606"/>
    <lineage>
        <taxon>Eukaryota</taxon>
        <taxon>Metazoa</taxon>
        <taxon>Chordata</taxon>
        <taxon>Craniata</taxon>
        <taxon>Vertebrata</taxon>
        <taxon>Euteleostomi</taxon>
        <taxon>Mammalia</taxon>
        <taxon>Eutheria</taxon>
        <taxon>Euarchontoglires</taxon>
        <taxon>Primates</taxon>
        <taxon>Haplorrhini</taxon>
        <taxon>Catarrhini</taxon>
        <taxon>Hominidae</taxon>
        <taxon>Homo</taxon>
    </lineage>
</organism>
<reference key="1">
    <citation type="journal article" date="2001" name="J. Immunol.">
        <title>Isolation of a new melanoma antigen, MART-2, containing a mutated epitope recognized by autologous tumor-infiltrating T lymphocytes.</title>
        <authorList>
            <person name="Kawakami Y."/>
            <person name="Wang X."/>
            <person name="Shofuda T."/>
            <person name="Sumimoto H."/>
            <person name="Tupesis J."/>
            <person name="Fitzgerald E."/>
            <person name="Rosenberg S."/>
        </authorList>
    </citation>
    <scope>NUCLEOTIDE SEQUENCE [MRNA] (ISOFORMS 2 AND 3)</scope>
    <scope>TISSUE SPECIFICITY</scope>
    <scope>GTP-BINDING</scope>
    <scope>CHARACTERIZATION OF VARIANT GLU-448</scope>
    <scope>VARIANT SER-450</scope>
    <source>
        <tissue>Melanoma</tissue>
    </source>
</reference>
<reference key="2">
    <citation type="journal article" date="2004" name="Nat. Genet.">
        <title>Complete sequencing and characterization of 21,243 full-length human cDNAs.</title>
        <authorList>
            <person name="Ota T."/>
            <person name="Suzuki Y."/>
            <person name="Nishikawa T."/>
            <person name="Otsuki T."/>
            <person name="Sugiyama T."/>
            <person name="Irie R."/>
            <person name="Wakamatsu A."/>
            <person name="Hayashi K."/>
            <person name="Sato H."/>
            <person name="Nagai K."/>
            <person name="Kimura K."/>
            <person name="Makita H."/>
            <person name="Sekine M."/>
            <person name="Obayashi M."/>
            <person name="Nishi T."/>
            <person name="Shibahara T."/>
            <person name="Tanaka T."/>
            <person name="Ishii S."/>
            <person name="Yamamoto J."/>
            <person name="Saito K."/>
            <person name="Kawai Y."/>
            <person name="Isono Y."/>
            <person name="Nakamura Y."/>
            <person name="Nagahari K."/>
            <person name="Murakami K."/>
            <person name="Yasuda T."/>
            <person name="Iwayanagi T."/>
            <person name="Wagatsuma M."/>
            <person name="Shiratori A."/>
            <person name="Sudo H."/>
            <person name="Hosoiri T."/>
            <person name="Kaku Y."/>
            <person name="Kodaira H."/>
            <person name="Kondo H."/>
            <person name="Sugawara M."/>
            <person name="Takahashi M."/>
            <person name="Kanda K."/>
            <person name="Yokoi T."/>
            <person name="Furuya T."/>
            <person name="Kikkawa E."/>
            <person name="Omura Y."/>
            <person name="Abe K."/>
            <person name="Kamihara K."/>
            <person name="Katsuta N."/>
            <person name="Sato K."/>
            <person name="Tanikawa M."/>
            <person name="Yamazaki M."/>
            <person name="Ninomiya K."/>
            <person name="Ishibashi T."/>
            <person name="Yamashita H."/>
            <person name="Murakawa K."/>
            <person name="Fujimori K."/>
            <person name="Tanai H."/>
            <person name="Kimata M."/>
            <person name="Watanabe M."/>
            <person name="Hiraoka S."/>
            <person name="Chiba Y."/>
            <person name="Ishida S."/>
            <person name="Ono Y."/>
            <person name="Takiguchi S."/>
            <person name="Watanabe S."/>
            <person name="Yosida M."/>
            <person name="Hotuta T."/>
            <person name="Kusano J."/>
            <person name="Kanehori K."/>
            <person name="Takahashi-Fujii A."/>
            <person name="Hara H."/>
            <person name="Tanase T.-O."/>
            <person name="Nomura Y."/>
            <person name="Togiya S."/>
            <person name="Komai F."/>
            <person name="Hara R."/>
            <person name="Takeuchi K."/>
            <person name="Arita M."/>
            <person name="Imose N."/>
            <person name="Musashino K."/>
            <person name="Yuuki H."/>
            <person name="Oshima A."/>
            <person name="Sasaki N."/>
            <person name="Aotsuka S."/>
            <person name="Yoshikawa Y."/>
            <person name="Matsunawa H."/>
            <person name="Ichihara T."/>
            <person name="Shiohata N."/>
            <person name="Sano S."/>
            <person name="Moriya S."/>
            <person name="Momiyama H."/>
            <person name="Satoh N."/>
            <person name="Takami S."/>
            <person name="Terashima Y."/>
            <person name="Suzuki O."/>
            <person name="Nakagawa S."/>
            <person name="Senoh A."/>
            <person name="Mizoguchi H."/>
            <person name="Goto Y."/>
            <person name="Shimizu F."/>
            <person name="Wakebe H."/>
            <person name="Hishigaki H."/>
            <person name="Watanabe T."/>
            <person name="Sugiyama A."/>
            <person name="Takemoto M."/>
            <person name="Kawakami B."/>
            <person name="Yamazaki M."/>
            <person name="Watanabe K."/>
            <person name="Kumagai A."/>
            <person name="Itakura S."/>
            <person name="Fukuzumi Y."/>
            <person name="Fujimori Y."/>
            <person name="Komiyama M."/>
            <person name="Tashiro H."/>
            <person name="Tanigami A."/>
            <person name="Fujiwara T."/>
            <person name="Ono T."/>
            <person name="Yamada K."/>
            <person name="Fujii Y."/>
            <person name="Ozaki K."/>
            <person name="Hirao M."/>
            <person name="Ohmori Y."/>
            <person name="Kawabata A."/>
            <person name="Hikiji T."/>
            <person name="Kobatake N."/>
            <person name="Inagaki H."/>
            <person name="Ikema Y."/>
            <person name="Okamoto S."/>
            <person name="Okitani R."/>
            <person name="Kawakami T."/>
            <person name="Noguchi S."/>
            <person name="Itoh T."/>
            <person name="Shigeta K."/>
            <person name="Senba T."/>
            <person name="Matsumura K."/>
            <person name="Nakajima Y."/>
            <person name="Mizuno T."/>
            <person name="Morinaga M."/>
            <person name="Sasaki M."/>
            <person name="Togashi T."/>
            <person name="Oyama M."/>
            <person name="Hata H."/>
            <person name="Watanabe M."/>
            <person name="Komatsu T."/>
            <person name="Mizushima-Sugano J."/>
            <person name="Satoh T."/>
            <person name="Shirai Y."/>
            <person name="Takahashi Y."/>
            <person name="Nakagawa K."/>
            <person name="Okumura K."/>
            <person name="Nagase T."/>
            <person name="Nomura N."/>
            <person name="Kikuchi H."/>
            <person name="Masuho Y."/>
            <person name="Yamashita R."/>
            <person name="Nakai K."/>
            <person name="Yada T."/>
            <person name="Nakamura Y."/>
            <person name="Ohara O."/>
            <person name="Isogai T."/>
            <person name="Sugano S."/>
        </authorList>
    </citation>
    <scope>NUCLEOTIDE SEQUENCE [LARGE SCALE MRNA] (ISOFORMS 1; 5; 6 AND 7)</scope>
    <scope>VARIANT ARG-188</scope>
    <source>
        <tissue>Brain</tissue>
        <tissue>Lung</tissue>
        <tissue>Teratocarcinoma</tissue>
        <tissue>Testis</tissue>
        <tissue>Trachea</tissue>
    </source>
</reference>
<reference key="3">
    <citation type="journal article" date="2007" name="BMC Genomics">
        <title>The full-ORF clone resource of the German cDNA consortium.</title>
        <authorList>
            <person name="Bechtel S."/>
            <person name="Rosenfelder H."/>
            <person name="Duda A."/>
            <person name="Schmidt C.P."/>
            <person name="Ernst U."/>
            <person name="Wellenreuther R."/>
            <person name="Mehrle A."/>
            <person name="Schuster C."/>
            <person name="Bahr A."/>
            <person name="Bloecker H."/>
            <person name="Heubner D."/>
            <person name="Hoerlein A."/>
            <person name="Michel G."/>
            <person name="Wedler H."/>
            <person name="Koehrer K."/>
            <person name="Ottenwaelder B."/>
            <person name="Poustka A."/>
            <person name="Wiemann S."/>
            <person name="Schupp I."/>
        </authorList>
    </citation>
    <scope>NUCLEOTIDE SEQUENCE [LARGE SCALE MRNA] (ISOFORM 4)</scope>
    <source>
        <tissue>Brain cortex</tissue>
    </source>
</reference>
<reference key="4">
    <citation type="journal article" date="2006" name="Nature">
        <title>The DNA sequence and biological annotation of human chromosome 1.</title>
        <authorList>
            <person name="Gregory S.G."/>
            <person name="Barlow K.F."/>
            <person name="McLay K.E."/>
            <person name="Kaul R."/>
            <person name="Swarbreck D."/>
            <person name="Dunham A."/>
            <person name="Scott C.E."/>
            <person name="Howe K.L."/>
            <person name="Woodfine K."/>
            <person name="Spencer C.C.A."/>
            <person name="Jones M.C."/>
            <person name="Gillson C."/>
            <person name="Searle S."/>
            <person name="Zhou Y."/>
            <person name="Kokocinski F."/>
            <person name="McDonald L."/>
            <person name="Evans R."/>
            <person name="Phillips K."/>
            <person name="Atkinson A."/>
            <person name="Cooper R."/>
            <person name="Jones C."/>
            <person name="Hall R.E."/>
            <person name="Andrews T.D."/>
            <person name="Lloyd C."/>
            <person name="Ainscough R."/>
            <person name="Almeida J.P."/>
            <person name="Ambrose K.D."/>
            <person name="Anderson F."/>
            <person name="Andrew R.W."/>
            <person name="Ashwell R.I.S."/>
            <person name="Aubin K."/>
            <person name="Babbage A.K."/>
            <person name="Bagguley C.L."/>
            <person name="Bailey J."/>
            <person name="Beasley H."/>
            <person name="Bethel G."/>
            <person name="Bird C.P."/>
            <person name="Bray-Allen S."/>
            <person name="Brown J.Y."/>
            <person name="Brown A.J."/>
            <person name="Buckley D."/>
            <person name="Burton J."/>
            <person name="Bye J."/>
            <person name="Carder C."/>
            <person name="Chapman J.C."/>
            <person name="Clark S.Y."/>
            <person name="Clarke G."/>
            <person name="Clee C."/>
            <person name="Cobley V."/>
            <person name="Collier R.E."/>
            <person name="Corby N."/>
            <person name="Coville G.J."/>
            <person name="Davies J."/>
            <person name="Deadman R."/>
            <person name="Dunn M."/>
            <person name="Earthrowl M."/>
            <person name="Ellington A.G."/>
            <person name="Errington H."/>
            <person name="Frankish A."/>
            <person name="Frankland J."/>
            <person name="French L."/>
            <person name="Garner P."/>
            <person name="Garnett J."/>
            <person name="Gay L."/>
            <person name="Ghori M.R.J."/>
            <person name="Gibson R."/>
            <person name="Gilby L.M."/>
            <person name="Gillett W."/>
            <person name="Glithero R.J."/>
            <person name="Grafham D.V."/>
            <person name="Griffiths C."/>
            <person name="Griffiths-Jones S."/>
            <person name="Grocock R."/>
            <person name="Hammond S."/>
            <person name="Harrison E.S.I."/>
            <person name="Hart E."/>
            <person name="Haugen E."/>
            <person name="Heath P.D."/>
            <person name="Holmes S."/>
            <person name="Holt K."/>
            <person name="Howden P.J."/>
            <person name="Hunt A.R."/>
            <person name="Hunt S.E."/>
            <person name="Hunter G."/>
            <person name="Isherwood J."/>
            <person name="James R."/>
            <person name="Johnson C."/>
            <person name="Johnson D."/>
            <person name="Joy A."/>
            <person name="Kay M."/>
            <person name="Kershaw J.K."/>
            <person name="Kibukawa M."/>
            <person name="Kimberley A.M."/>
            <person name="King A."/>
            <person name="Knights A.J."/>
            <person name="Lad H."/>
            <person name="Laird G."/>
            <person name="Lawlor S."/>
            <person name="Leongamornlert D.A."/>
            <person name="Lloyd D.M."/>
            <person name="Loveland J."/>
            <person name="Lovell J."/>
            <person name="Lush M.J."/>
            <person name="Lyne R."/>
            <person name="Martin S."/>
            <person name="Mashreghi-Mohammadi M."/>
            <person name="Matthews L."/>
            <person name="Matthews N.S.W."/>
            <person name="McLaren S."/>
            <person name="Milne S."/>
            <person name="Mistry S."/>
            <person name="Moore M.J.F."/>
            <person name="Nickerson T."/>
            <person name="O'Dell C.N."/>
            <person name="Oliver K."/>
            <person name="Palmeiri A."/>
            <person name="Palmer S.A."/>
            <person name="Parker A."/>
            <person name="Patel D."/>
            <person name="Pearce A.V."/>
            <person name="Peck A.I."/>
            <person name="Pelan S."/>
            <person name="Phelps K."/>
            <person name="Phillimore B.J."/>
            <person name="Plumb R."/>
            <person name="Rajan J."/>
            <person name="Raymond C."/>
            <person name="Rouse G."/>
            <person name="Saenphimmachak C."/>
            <person name="Sehra H.K."/>
            <person name="Sheridan E."/>
            <person name="Shownkeen R."/>
            <person name="Sims S."/>
            <person name="Skuce C.D."/>
            <person name="Smith M."/>
            <person name="Steward C."/>
            <person name="Subramanian S."/>
            <person name="Sycamore N."/>
            <person name="Tracey A."/>
            <person name="Tromans A."/>
            <person name="Van Helmond Z."/>
            <person name="Wall M."/>
            <person name="Wallis J.M."/>
            <person name="White S."/>
            <person name="Whitehead S.L."/>
            <person name="Wilkinson J.E."/>
            <person name="Willey D.L."/>
            <person name="Williams H."/>
            <person name="Wilming L."/>
            <person name="Wray P.W."/>
            <person name="Wu Z."/>
            <person name="Coulson A."/>
            <person name="Vaudin M."/>
            <person name="Sulston J.E."/>
            <person name="Durbin R.M."/>
            <person name="Hubbard T."/>
            <person name="Wooster R."/>
            <person name="Dunham I."/>
            <person name="Carter N.P."/>
            <person name="McVean G."/>
            <person name="Ross M.T."/>
            <person name="Harrow J."/>
            <person name="Olson M.V."/>
            <person name="Beck S."/>
            <person name="Rogers J."/>
            <person name="Bentley D.R."/>
        </authorList>
    </citation>
    <scope>NUCLEOTIDE SEQUENCE [LARGE SCALE GENOMIC DNA]</scope>
</reference>
<reference key="5">
    <citation type="submission" date="2005-09" db="EMBL/GenBank/DDBJ databases">
        <authorList>
            <person name="Mural R.J."/>
            <person name="Istrail S."/>
            <person name="Sutton G.G."/>
            <person name="Florea L."/>
            <person name="Halpern A.L."/>
            <person name="Mobarry C.M."/>
            <person name="Lippert R."/>
            <person name="Walenz B."/>
            <person name="Shatkay H."/>
            <person name="Dew I."/>
            <person name="Miller J.R."/>
            <person name="Flanigan M.J."/>
            <person name="Edwards N.J."/>
            <person name="Bolanos R."/>
            <person name="Fasulo D."/>
            <person name="Halldorsson B.V."/>
            <person name="Hannenhalli S."/>
            <person name="Turner R."/>
            <person name="Yooseph S."/>
            <person name="Lu F."/>
            <person name="Nusskern D.R."/>
            <person name="Shue B.C."/>
            <person name="Zheng X.H."/>
            <person name="Zhong F."/>
            <person name="Delcher A.L."/>
            <person name="Huson D.H."/>
            <person name="Kravitz S.A."/>
            <person name="Mouchard L."/>
            <person name="Reinert K."/>
            <person name="Remington K.A."/>
            <person name="Clark A.G."/>
            <person name="Waterman M.S."/>
            <person name="Eichler E.E."/>
            <person name="Adams M.D."/>
            <person name="Hunkapiller M.W."/>
            <person name="Myers E.W."/>
            <person name="Venter J.C."/>
        </authorList>
    </citation>
    <scope>NUCLEOTIDE SEQUENCE [LARGE SCALE GENOMIC DNA]</scope>
</reference>
<reference key="6">
    <citation type="journal article" date="2004" name="Genome Res.">
        <title>The status, quality, and expansion of the NIH full-length cDNA project: the Mammalian Gene Collection (MGC).</title>
        <authorList>
            <consortium name="The MGC Project Team"/>
        </authorList>
    </citation>
    <scope>NUCLEOTIDE SEQUENCE [LARGE SCALE MRNA] (ISOFORM 1)</scope>
    <scope>VARIANT ASN-182</scope>
    <source>
        <tissue>Brain</tissue>
        <tissue>Testis</tissue>
    </source>
</reference>
<reference key="7">
    <citation type="submission" date="1999-05" db="EMBL/GenBank/DDBJ databases">
        <authorList>
            <person name="Rhodes S."/>
        </authorList>
    </citation>
    <scope>NUCLEOTIDE SEQUENCE [LARGE SCALE MRNA] OF 32-335 (ISOFORM 2)</scope>
</reference>
<reference key="8">
    <citation type="journal article" date="2001" name="Science">
        <title>Skinny hedgehog, an acyltransferase required for palmitoylation and activity of the hedgehog signal.</title>
        <authorList>
            <person name="Chamoun Z."/>
            <person name="Mann R.K."/>
            <person name="Nellen D."/>
            <person name="von Kessler D.P."/>
            <person name="Bellotto M."/>
            <person name="Beachy P.A."/>
            <person name="Basler K."/>
        </authorList>
    </citation>
    <scope>NUCLEOTIDE SEQUENCE [MRNA] OF 328-390 (ISOFORM 1)</scope>
</reference>
<reference key="9">
    <citation type="journal article" date="2008" name="J. Biol. Chem.">
        <title>Hhat is a palmitoylacyltransferase with specificity for N-palmitoylation of Sonic Hedgehog.</title>
        <authorList>
            <person name="Buglino J.A."/>
            <person name="Resh M.D."/>
        </authorList>
    </citation>
    <scope>FUNCTION</scope>
    <scope>CATALYTIC ACTIVITY</scope>
    <scope>BIOPHYSICOCHEMICAL PROPERTIES</scope>
    <scope>ACTIVITY REGULATION</scope>
    <scope>REGION</scope>
    <scope>MUTAGENESIS OF HIS-379</scope>
    <scope>SUBCELLULAR LOCATION</scope>
</reference>
<reference key="10">
    <citation type="journal article" date="2015" name="J. Biol. Chem.">
        <title>Membrane topology of hedgehog acyltransferase.</title>
        <authorList>
            <person name="Matevossian A."/>
            <person name="Resh M.D."/>
        </authorList>
    </citation>
    <scope>SUBCELLULAR LOCATION</scope>
    <scope>TOPOLOGY</scope>
</reference>
<reference key="11">
    <citation type="journal article" date="2015" name="J. Biol. Chem.">
        <title>Topological analysis of Hedgehog acyltransferase, a multipalmitoylated transmembrane protein.</title>
        <authorList>
            <person name="Konitsiotis A.D."/>
            <person name="Jovanovic B."/>
            <person name="Ciepla P."/>
            <person name="Spitaler M."/>
            <person name="Lanyon-Hogg T."/>
            <person name="Tate E.W."/>
            <person name="Magee A.I."/>
        </authorList>
    </citation>
    <scope>SUBCELLULAR LOCATION</scope>
    <scope>TOPOLOGY</scope>
    <scope>PALMITOYLATION AT CYS-188; CYS-242; CYS-324 AND CYS-410</scope>
</reference>
<reference key="12">
    <citation type="journal article" date="2019" name="Cell Rep.">
        <title>Hedgehog Acyltransferase Promotes Uptake of Palmitoyl-CoA across the Endoplasmic Reticulum Membrane.</title>
        <authorList>
            <person name="Asciolla J.J."/>
            <person name="Resh M.D."/>
        </authorList>
    </citation>
    <scope>FUNCTION</scope>
    <scope>CATALYTIC ACTIVITY</scope>
    <scope>MUTAGENESIS OF TYR-351 AND HIS-379</scope>
</reference>
<reference key="13">
    <citation type="journal article" date="2014" name="PLoS Genet.">
        <title>Loss of function mutation in the palmitoyl-transferase HHAT leads to syndromic 46,XY disorder of sex development by impeding Hedgehog protein palmitoylation and signaling.</title>
        <authorList>
            <person name="Callier P."/>
            <person name="Calvel P."/>
            <person name="Matevossian A."/>
            <person name="Makrythanasis P."/>
            <person name="Bernard P."/>
            <person name="Kurosaka H."/>
            <person name="Vannier A."/>
            <person name="Thauvin-Robinet C."/>
            <person name="Borel C."/>
            <person name="Mazaud-Guittot S."/>
            <person name="Rolland A."/>
            <person name="Desdoits-Lethimonier C."/>
            <person name="Guipponi M."/>
            <person name="Zimmermann C."/>
            <person name="Stevant I."/>
            <person name="Kuhne F."/>
            <person name="Conne B."/>
            <person name="Santoni F."/>
            <person name="Lambert S."/>
            <person name="Huet F."/>
            <person name="Mugneret F."/>
            <person name="Jaruzelska J."/>
            <person name="Faivre L."/>
            <person name="Wilhelm D."/>
            <person name="Jegou B."/>
            <person name="Trainor P.A."/>
            <person name="Resh M.D."/>
            <person name="Antonarakis S.E."/>
            <person name="Nef S."/>
        </authorList>
    </citation>
    <scope>VARIANT NNMS VAL-287</scope>
    <scope>INVOLVEMENT IN NNMS</scope>
    <scope>CHARACTERIZATION OF VARIANT NNMS VAL-287</scope>
    <scope>FUNCTION</scope>
    <scope>CATALYTIC ACTIVITY</scope>
    <scope>TISSUE SPECIFICITY</scope>
</reference>
<reference key="14">
    <citation type="journal article" date="2019" name="Am. J. Med. Genet. A">
        <title>Biallelic novel missense HHAT variant causes syndromic microcephaly and cerebellar-vermis hypoplasia.</title>
        <authorList>
            <person name="Abdel-Salam G.M.H."/>
            <person name="Mazen I."/>
            <person name="Eid M."/>
            <person name="Ewida N."/>
            <person name="Shaheen R."/>
            <person name="Alkuraya F.S."/>
        </authorList>
    </citation>
    <scope>VARIANT NNMS PRO-257</scope>
    <scope>INVOLVEMENT IN NNMS</scope>
</reference>
<gene>
    <name type="primary">HHAT</name>
    <name type="synonym">MART2</name>
    <name type="synonym">SKI1</name>
</gene>
<comment type="function">
    <text evidence="3 6 7 11">Palmitoyl acyltransferase that catalyzes N-terminal palmitoylation of SHH; which is required for SHH signaling (PubMed:18534984, PubMed:24784881, PubMed:31875564). It also catalyzes N-terminal palmitoylation of DHH (PubMed:24784881). Promotes the transfer of palmitoyl-CoA from the cytoplasmic to the luminal side of the endoplasmic reticulum membrane, where SHH palmitoylation occurs (PubMed:31875564). It is an essential factor for proper embryonic development and testicular organogenesis (PubMed:24784881).</text>
</comment>
<comment type="catalytic activity">
    <reaction evidence="6 7 11">
        <text>N-terminal L-cysteinyl-[protein] + hexadecanoyl-CoA = N-terminal N-hexadecanoyl-L-cysteinyl-[protein] + CoA + H(+)</text>
        <dbReference type="Rhea" id="RHEA:59528"/>
        <dbReference type="Rhea" id="RHEA-COMP:12707"/>
        <dbReference type="Rhea" id="RHEA-COMP:15376"/>
        <dbReference type="ChEBI" id="CHEBI:15378"/>
        <dbReference type="ChEBI" id="CHEBI:57287"/>
        <dbReference type="ChEBI" id="CHEBI:57379"/>
        <dbReference type="ChEBI" id="CHEBI:65250"/>
        <dbReference type="ChEBI" id="CHEBI:143147"/>
    </reaction>
    <physiologicalReaction direction="left-to-right" evidence="18">
        <dbReference type="Rhea" id="RHEA:59529"/>
    </physiologicalReaction>
</comment>
<comment type="catalytic activity">
    <reaction evidence="18">
        <text>N-terminal L-cysteinyl-[protein]-C-terminal glycyl cholesterol ester + hexadecanoyl-CoA = N-terminal N-hexadecanoyl-L-cysteinyl-[protein]-C-terminal glycyl cholesterol ester + CoA + H(+)</text>
        <dbReference type="Rhea" id="RHEA:59580"/>
        <dbReference type="Rhea" id="RHEA-COMP:15388"/>
        <dbReference type="Rhea" id="RHEA-COMP:15389"/>
        <dbReference type="ChEBI" id="CHEBI:15378"/>
        <dbReference type="ChEBI" id="CHEBI:57287"/>
        <dbReference type="ChEBI" id="CHEBI:57379"/>
        <dbReference type="ChEBI" id="CHEBI:65250"/>
        <dbReference type="ChEBI" id="CHEBI:143135"/>
        <dbReference type="ChEBI" id="CHEBI:143147"/>
    </reaction>
    <physiologicalReaction direction="left-to-right" evidence="18">
        <dbReference type="Rhea" id="RHEA:59581"/>
    </physiologicalReaction>
</comment>
<comment type="activity regulation">
    <text evidence="6">Inhibited by NaCl concentrations above 150 mM.</text>
</comment>
<comment type="biophysicochemical properties">
    <kinetics>
        <KM evidence="6">1.25 uM for SHH</KM>
        <KM evidence="6">3 uM for hexadecanoyl-CoA</KM>
        <Vmax evidence="6">0.25 pmol/min/mg enzyme for SHH</Vmax>
        <Vmax evidence="6">0.21 pmol/min/mg enzyme for hexadecanoyl-CoA</Vmax>
    </kinetics>
    <phDependence>
        <text evidence="6">Optimum pH is 6.5.</text>
    </phDependence>
</comment>
<comment type="interaction">
    <interactant intactId="EBI-12951255">
        <id>Q5VTY9</id>
    </interactant>
    <interactant intactId="EBI-727004">
        <id>O00560</id>
        <label>SDCBP</label>
    </interactant>
    <organismsDiffer>false</organismsDiffer>
    <experiments>3</experiments>
</comment>
<comment type="subcellular location">
    <subcellularLocation>
        <location evidence="8 9 18">Endoplasmic reticulum membrane</location>
        <topology evidence="8 9">Multi-pass membrane protein</topology>
    </subcellularLocation>
    <subcellularLocation>
        <location evidence="18">Golgi apparatus membrane</location>
        <topology evidence="1">Multi-pass membrane protein</topology>
    </subcellularLocation>
    <text evidence="18">Co-localizes with SHH in the ER and Golgi membrane.</text>
</comment>
<comment type="alternative products">
    <event type="alternative splicing"/>
    <isoform>
        <id>Q5VTY9-1</id>
        <name>1</name>
        <sequence type="displayed"/>
    </isoform>
    <isoform>
        <id>Q5VTY9-2</id>
        <name>2</name>
        <sequence type="described" ref="VSP_016686 VSP_016689"/>
    </isoform>
    <isoform>
        <id>Q5VTY9-3</id>
        <name>3</name>
        <sequence type="described" ref="VSP_016689"/>
    </isoform>
    <isoform>
        <id>Q5VTY9-4</id>
        <name>4</name>
        <sequence type="described" ref="VSP_016685 VSP_016687 VSP_016688"/>
    </isoform>
    <isoform>
        <id>Q5VTY9-5</id>
        <name>5</name>
        <sequence type="described" ref="VSP_016686"/>
    </isoform>
    <isoform>
        <id>Q5VTY9-6</id>
        <name>6</name>
        <sequence type="described" ref="VSP_043481"/>
    </isoform>
    <isoform>
        <id>Q5VTY9-7</id>
        <name>7</name>
        <sequence type="described" ref="VSP_044968"/>
    </isoform>
</comment>
<comment type="tissue specificity">
    <text evidence="2 7">Widely expressed. Expressed in fetal ovary and testis, with high levels of expression observed in Sertoli cells (PubMed:24784881).</text>
</comment>
<comment type="disease" evidence="7 10">
    <disease id="DI-05999">
        <name>Nivelon-Nivelon-Mabille syndrome</name>
        <acronym>NNMS</acronym>
        <description>An autosomal recessive syndrome characterized by progressive microcephaly, cerebellar vermis hypoplasia, and skeletal dysplasia. Additional variable features include early infantile-onset seizures, intrauterine and postnatal growth retardation, generalized chondrodysplasia, and micromelia. 46,XY gonadal dysgenesis may be present.</description>
        <dbReference type="MIM" id="600092"/>
    </disease>
    <text>The disease is caused by variants affecting the gene represented in this entry.</text>
</comment>
<comment type="similarity">
    <text evidence="16">Belongs to the membrane-bound acyltransferase family. HHAT subfamily.</text>
</comment>